<evidence type="ECO:0000250" key="1"/>
<evidence type="ECO:0000250" key="2">
    <source>
        <dbReference type="UniProtKB" id="Q99231"/>
    </source>
</evidence>
<evidence type="ECO:0000255" key="3">
    <source>
        <dbReference type="PROSITE-ProRule" id="PRU00457"/>
    </source>
</evidence>
<evidence type="ECO:0000255" key="4">
    <source>
        <dbReference type="PROSITE-ProRule" id="PRU10094"/>
    </source>
</evidence>
<evidence type="ECO:0000256" key="5">
    <source>
        <dbReference type="SAM" id="MobiDB-lite"/>
    </source>
</evidence>
<feature type="chain" id="PRO_0000279043" description="Transposon Ty1-ER1 Gag-Pol polyprotein">
    <location>
        <begin position="1"/>
        <end position="1755"/>
    </location>
</feature>
<feature type="chain" id="PRO_0000279044" description="Capsid protein" evidence="1">
    <location>
        <begin position="1"/>
        <end position="401"/>
    </location>
</feature>
<feature type="chain" id="PRO_0000279045" description="Ty1 protease" evidence="1">
    <location>
        <begin position="402"/>
        <end position="582"/>
    </location>
</feature>
<feature type="chain" id="PRO_0000279046" description="Integrase" evidence="1">
    <location>
        <begin position="583"/>
        <end position="1217"/>
    </location>
</feature>
<feature type="chain" id="PRO_0000279047" description="Reverse transcriptase/ribonuclease H" evidence="1">
    <location>
        <begin position="1218"/>
        <end position="1755"/>
    </location>
</feature>
<feature type="domain" description="Integrase catalytic" evidence="3">
    <location>
        <begin position="660"/>
        <end position="835"/>
    </location>
</feature>
<feature type="domain" description="Reverse transcriptase Ty1/copia-type">
    <location>
        <begin position="1338"/>
        <end position="1476"/>
    </location>
</feature>
<feature type="domain" description="RNase H Ty1/copia-type">
    <location>
        <begin position="1610"/>
        <end position="1752"/>
    </location>
</feature>
<feature type="region of interest" description="Disordered" evidence="5">
    <location>
        <begin position="1"/>
        <end position="93"/>
    </location>
</feature>
<feature type="region of interest" description="Disordered" evidence="5">
    <location>
        <begin position="126"/>
        <end position="174"/>
    </location>
</feature>
<feature type="region of interest" description="RNA-binding" evidence="1">
    <location>
        <begin position="299"/>
        <end position="401"/>
    </location>
</feature>
<feature type="region of interest" description="Disordered" evidence="5">
    <location>
        <begin position="352"/>
        <end position="421"/>
    </location>
</feature>
<feature type="region of interest" description="Integrase-type zinc finger-like">
    <location>
        <begin position="583"/>
        <end position="640"/>
    </location>
</feature>
<feature type="region of interest" description="Disordered" evidence="5">
    <location>
        <begin position="956"/>
        <end position="1087"/>
    </location>
</feature>
<feature type="region of interest" description="Disordered" evidence="5">
    <location>
        <begin position="1092"/>
        <end position="1111"/>
    </location>
</feature>
<feature type="region of interest" description="Disordered" evidence="5">
    <location>
        <begin position="1130"/>
        <end position="1171"/>
    </location>
</feature>
<feature type="short sequence motif" description="Bipartite nuclear localization signal" evidence="1">
    <location>
        <begin position="1178"/>
        <end position="1212"/>
    </location>
</feature>
<feature type="compositionally biased region" description="Polar residues" evidence="5">
    <location>
        <begin position="1"/>
        <end position="23"/>
    </location>
</feature>
<feature type="compositionally biased region" description="Polar residues" evidence="5">
    <location>
        <begin position="48"/>
        <end position="60"/>
    </location>
</feature>
<feature type="compositionally biased region" description="Polar residues" evidence="5">
    <location>
        <begin position="127"/>
        <end position="152"/>
    </location>
</feature>
<feature type="compositionally biased region" description="Low complexity" evidence="5">
    <location>
        <begin position="153"/>
        <end position="165"/>
    </location>
</feature>
<feature type="compositionally biased region" description="Low complexity" evidence="5">
    <location>
        <begin position="402"/>
        <end position="418"/>
    </location>
</feature>
<feature type="compositionally biased region" description="Low complexity" evidence="5">
    <location>
        <begin position="960"/>
        <end position="969"/>
    </location>
</feature>
<feature type="compositionally biased region" description="Polar residues" evidence="5">
    <location>
        <begin position="1005"/>
        <end position="1015"/>
    </location>
</feature>
<feature type="compositionally biased region" description="Basic and acidic residues" evidence="5">
    <location>
        <begin position="1038"/>
        <end position="1053"/>
    </location>
</feature>
<feature type="compositionally biased region" description="Polar residues" evidence="5">
    <location>
        <begin position="1054"/>
        <end position="1082"/>
    </location>
</feature>
<feature type="compositionally biased region" description="Polar residues" evidence="5">
    <location>
        <begin position="1101"/>
        <end position="1111"/>
    </location>
</feature>
<feature type="active site" description="For protease activity; shared with dimeric partner" evidence="4">
    <location>
        <position position="461"/>
    </location>
</feature>
<feature type="binding site" evidence="3">
    <location>
        <position position="671"/>
    </location>
    <ligand>
        <name>Mg(2+)</name>
        <dbReference type="ChEBI" id="CHEBI:18420"/>
        <label>1</label>
        <note>catalytic; for integrase activity</note>
    </ligand>
</feature>
<feature type="binding site" evidence="3">
    <location>
        <position position="736"/>
    </location>
    <ligand>
        <name>Mg(2+)</name>
        <dbReference type="ChEBI" id="CHEBI:18420"/>
        <label>1</label>
        <note>catalytic; for integrase activity</note>
    </ligand>
</feature>
<feature type="binding site" evidence="3">
    <location>
        <position position="1346"/>
    </location>
    <ligand>
        <name>Mg(2+)</name>
        <dbReference type="ChEBI" id="CHEBI:18420"/>
        <label>2</label>
        <note>catalytic; for reverse transcriptase activity</note>
    </ligand>
</feature>
<feature type="binding site" evidence="3">
    <location>
        <position position="1427"/>
    </location>
    <ligand>
        <name>Mg(2+)</name>
        <dbReference type="ChEBI" id="CHEBI:18420"/>
        <label>2</label>
        <note>catalytic; for reverse transcriptase activity</note>
    </ligand>
</feature>
<feature type="binding site" evidence="3">
    <location>
        <position position="1428"/>
    </location>
    <ligand>
        <name>Mg(2+)</name>
        <dbReference type="ChEBI" id="CHEBI:18420"/>
        <label>2</label>
        <note>catalytic; for reverse transcriptase activity</note>
    </ligand>
</feature>
<feature type="binding site" evidence="3">
    <location>
        <position position="1610"/>
    </location>
    <ligand>
        <name>Mg(2+)</name>
        <dbReference type="ChEBI" id="CHEBI:18420"/>
        <label>3</label>
        <note>catalytic; for RNase H activity</note>
    </ligand>
</feature>
<feature type="binding site" evidence="3">
    <location>
        <position position="1652"/>
    </location>
    <ligand>
        <name>Mg(2+)</name>
        <dbReference type="ChEBI" id="CHEBI:18420"/>
        <label>3</label>
        <note>catalytic; for RNase H activity</note>
    </ligand>
</feature>
<feature type="binding site" evidence="3">
    <location>
        <position position="1685"/>
    </location>
    <ligand>
        <name>Mg(2+)</name>
        <dbReference type="ChEBI" id="CHEBI:18420"/>
        <label>3</label>
        <note>catalytic; for RNase H activity</note>
    </ligand>
</feature>
<feature type="site" description="Cleavage; by Ty1 protease" evidence="1">
    <location>
        <begin position="401"/>
        <end position="402"/>
    </location>
</feature>
<feature type="site" description="Cleavage; by Ty1 protease" evidence="1">
    <location>
        <begin position="582"/>
        <end position="583"/>
    </location>
</feature>
<feature type="site" description="Cleavage; by Ty1 protease" evidence="1">
    <location>
        <begin position="1217"/>
        <end position="1218"/>
    </location>
</feature>
<feature type="modified residue" description="Phosphoserine" evidence="2">
    <location>
        <position position="416"/>
    </location>
</feature>
<sequence>MESQQLSQHSPISHGSACASVTSKEVHTNQDPLDVSASKTEECEKASTKANSQQTTTPASSAVPENPHHASPQPASVPPPQNGPYPQQCMMTQNQANPSGWSFYGHPSMIPYTPYQMSPMYFPPGPQSQFPQYPSSVGTPLSTPSPESGNTFTDSSSADSDMTSTKKYVRPPPMLTSPNDFPNWVKTYIKFLQNSNLGGIIPTVNGKPVRQITDDELTFLYNTFQIFAPSQFLPTWVKDILSVDYTDIMKILSKSIEKMQSDTQEANDIVTLANLQYNGSTPADAFETKVTNIIDRLNNNGIHINNKVACQLIMRGLSGEYKFLRYTRHRHLNMTVAELFLDIHAIYEEQQGSRNSKPNYRRNLSDEKNDSRSYTNTTKPKVIARNPQKTNNSKSKTARAHNVSTSNNSPSTDNDSISKSTTEPIQLNNKHDLHLGQELTESTVNHTNHSDDELPGHLLLDSGASRTLIRSAHHIHSASSNPDINVVDAQKRNIPINAIGDLQFHFQDNTKTSIKVLHTPNIAYDLLSLNELAAVDITACFTKNVLERSDGTVLAPIVKYGDFYWVSKKYLLPSNISVPTINNVHTSESTRKYPYPFIHRMLAHANAQTIRYSLKNNTITYFNESDVDWSSAIDYQCPDCLIGKSTKHRHIKGSRLKYQNSYEPFQYLHTDIFGPVHNLPKSAPSYFISFTDETTKFRWVYPLHDRREDSILDVFTTILAFIKNQFQASVLVIQMDRGSEYTNRTLHKFLEKNGITPCYTTTADSRAHGVAERLNRTLLDDCRTQLQCSGLPNHLWFSAIEFSTIVRNSLASPKSKKSARQHAGLAGLDISTLLPFGQPVIVNDHNPNSKIHPRGIPGYALHPSRNSYGYIIYLPSLKKTVDTTNYVILQGKESRLDQFNYDALTFDEDLNRLTASYQSFIASNEIQQSDDLNIESDHDFQSDIELHPEQPRNVLSKAVSPTDSTPPSTHTEDSKRVSKTNIRAPREVDPNISESNILPSKKRSSTPQISNIESTGSGGMHKLNVPLLAPMSQSNTHESSHASKSKDFRHSDSYSENETNHTNVPISSTGGTNNKTVPQISDQETEKRIIHRSPSIDASPPENNSSHNIVPIKTPTTVSEQNTEESIIADLPLPDLPPESPTEFPDPFKELPPINSHQTNSSLGGIGDSNAYTTINSKKRSLEDNETEIKVSRDTWNTKNMRSLEPPRSKKRIHLIAAVKAVKSIKPIRTTLRYDEAITYNKDIKEKEKYIEAYHKEVNQLLKMKTWDTDEYYDRKEIDPKRVINSMFIFNKKRDGTHKARFVARGDIQHPDTYDSGMQSNTVHHYALMTSLSLALDNNYYITQLDISSAYLYADIKEELYIRPPPHLGMNDKLIRLKKSLYGLKQSGANWYETIKSYLIKQCGMEEVRGWSCVFKNSQVTICLFVDDMILFSKDLNANKKIITTLKKQYDTKIINLGESDNEIQYDILGLEIKYQRGKYMKLGMENSLTEKIPKLNVPLNPKGRKLSAPGQPGLYIDQDELEIDEDEYKEKVHEMQKLIGLASYVGYKFRFDLLYYINTLAQHILFPSRQVLDMTYELIQFMWDTRDKQLIWHKNKPTEPDNKLVAISDASYGNQPYYKSQIGNIYLLNGKVIGGKSTKASLTCTSTTEAEIHAISESVPLLNNLSYLIQELNKKPIIKGLLTDSRSTISIIKSTNEEKFRNRFFGTKAMRLRDEVSGNNLYVYYIETKKNIADVMTKPLPIKTFKLLTNKWIH</sequence>
<organism>
    <name type="scientific">Saccharomyces cerevisiae (strain ATCC 204508 / S288c)</name>
    <name type="common">Baker's yeast</name>
    <dbReference type="NCBI Taxonomy" id="559292"/>
    <lineage>
        <taxon>Eukaryota</taxon>
        <taxon>Fungi</taxon>
        <taxon>Dikarya</taxon>
        <taxon>Ascomycota</taxon>
        <taxon>Saccharomycotina</taxon>
        <taxon>Saccharomycetes</taxon>
        <taxon>Saccharomycetales</taxon>
        <taxon>Saccharomycetaceae</taxon>
        <taxon>Saccharomyces</taxon>
    </lineage>
</organism>
<comment type="function">
    <text evidence="1">Capsid protein (CA) is the structural component of the virus-like particle (VLP), forming the shell that encapsulates the retrotransposons dimeric RNA genome. The particles are assembled from trimer-clustered units and there are holes in the capsid shells that allow for the diffusion of macromolecules. CA also has nucleocapsid-like chaperone activity, promoting primer tRNA(i)-Met annealing to the multipartite primer-binding site (PBS), dimerization of Ty1 RNA and initiation of reverse transcription (By similarity).</text>
</comment>
<comment type="function">
    <text evidence="1">The aspartyl protease (PR) mediates the proteolytic cleavages of the Gag and Gag-Pol polyproteins after assembly of the VLP.</text>
</comment>
<comment type="function">
    <text evidence="1">Reverse transcriptase/ribonuclease H (RT) is a multifunctional enzyme that catalyzes the conversion of the retro-elements RNA genome into dsDNA within the VLP. The enzyme displays a DNA polymerase activity that can copy either DNA or RNA templates, and a ribonuclease H (RNase H) activity that cleaves the RNA strand of RNA-DNA heteroduplexes during plus-strand synthesis and hydrolyzes RNA primers. The conversion leads to a linear dsDNA copy of the retrotransposon that includes long terminal repeats (LTRs) at both ends (By similarity).</text>
</comment>
<comment type="function">
    <text evidence="1">Integrase (IN) targets the VLP to the nucleus, where a subparticle preintegration complex (PIC) containing at least integrase and the newly synthesized dsDNA copy of the retrotransposon must transit the nuclear membrane. Once in the nucleus, integrase performs the integration of the dsDNA into the host genome (By similarity).</text>
</comment>
<comment type="catalytic activity">
    <reaction>
        <text>DNA(n) + a 2'-deoxyribonucleoside 5'-triphosphate = DNA(n+1) + diphosphate</text>
        <dbReference type="Rhea" id="RHEA:22508"/>
        <dbReference type="Rhea" id="RHEA-COMP:17339"/>
        <dbReference type="Rhea" id="RHEA-COMP:17340"/>
        <dbReference type="ChEBI" id="CHEBI:33019"/>
        <dbReference type="ChEBI" id="CHEBI:61560"/>
        <dbReference type="ChEBI" id="CHEBI:173112"/>
        <dbReference type="EC" id="2.7.7.49"/>
    </reaction>
</comment>
<comment type="catalytic activity">
    <reaction>
        <text>DNA(n) + a 2'-deoxyribonucleoside 5'-triphosphate = DNA(n+1) + diphosphate</text>
        <dbReference type="Rhea" id="RHEA:22508"/>
        <dbReference type="Rhea" id="RHEA-COMP:17339"/>
        <dbReference type="Rhea" id="RHEA-COMP:17340"/>
        <dbReference type="ChEBI" id="CHEBI:33019"/>
        <dbReference type="ChEBI" id="CHEBI:61560"/>
        <dbReference type="ChEBI" id="CHEBI:173112"/>
        <dbReference type="EC" id="2.7.7.7"/>
    </reaction>
</comment>
<comment type="catalytic activity">
    <reaction>
        <text>Endonucleolytic cleavage to 5'-phosphomonoester.</text>
        <dbReference type="EC" id="3.1.26.4"/>
    </reaction>
</comment>
<comment type="subunit">
    <text evidence="1">The capsid protein forms a homotrimer, from which the VLPs are assembled. The protease is a homodimer, whose active site consists of two apposed aspartic acid residues (By similarity).</text>
</comment>
<comment type="subcellular location">
    <subcellularLocation>
        <location>Cytoplasm</location>
    </subcellularLocation>
    <subcellularLocation>
        <location evidence="1">Nucleus</location>
    </subcellularLocation>
</comment>
<comment type="alternative products">
    <event type="ribosomal frameshifting"/>
    <isoform>
        <id>Q03612-1</id>
        <name>Transposon Ty1-ER1 Gag-Pol polyprotein</name>
        <sequence type="displayed"/>
    </isoform>
    <isoform>
        <id>P0CX71-1</id>
        <name>Transposon Ty1-ER1 Gag polyprotein</name>
        <sequence type="external"/>
    </isoform>
    <text evidence="1">The Gag-Pol polyprotein is generated by a +1 ribosomal frameshift. The ratio of Gag:Gag-Pol varies between 20:1 and 5:1 (By similarity).</text>
</comment>
<comment type="domain">
    <text evidence="1">The C-terminal RNA-binding region of CA is sufficient for all its nucleocapsid-like chaperone activities.</text>
</comment>
<comment type="domain">
    <text evidence="1">Integrase core domain contains the D-x(n)-D-x(35)-E motif, named for the phylogenetically conserved glutamic acid and aspartic acid residues and the invariant 35 amino acid spacing between the second and third acidic residues. Each acidic residue of the D,D(35)E motif is independently essential for the 3'-processing and strand transfer activities of purified integrase protein (By similarity).</text>
</comment>
<comment type="PTM">
    <text evidence="1">Initially, virus-like particles (VLPs) are composed of the structural unprocessed proteins Gag and Gag-Pol, and also contain the host initiator methionine tRNA (tRNA(i)-Met) which serves as a primer for minus-strand DNA synthesis, and a dimer of genomic Ty RNA. Processing of the polyproteins occurs within the particle and proceeds by an ordered pathway, called maturation. First, the protease (PR) is released by autocatalytic cleavage of the Gag-Pol polyprotein yielding capsid protein p45 and a Pol-p154 precursor protein. This cleavage is a prerequisite for subsequent processing of Pol-p154 at the remaining sites to release the mature structural and catalytic proteins. Maturation takes place prior to the RT reaction and is required to produce transposition-competent VLPs (By similarity).</text>
</comment>
<comment type="miscellaneous">
    <text>Retrotransposons are mobile genetic entities that are able to replicate via an RNA intermediate and a reverse transcription step. In contrast to retroviruses, retrotransposons are non-infectious, lack an envelope and remain intracellular. Ty1 retrotransposons belong to the copia elements (pseudoviridae).</text>
</comment>
<comment type="miscellaneous">
    <molecule>Isoform Transposon Ty1-ER1 Gag-Pol polyprotein</molecule>
    <text>Produced by +1 ribosomal frameshifting between codon Leu-435 and Gly-436 of the YER137C-A ORF.</text>
</comment>
<name>YE11B_YEAST</name>
<proteinExistence type="inferred from homology"/>
<keyword id="KW-0064">Aspartyl protease</keyword>
<keyword id="KW-0067">ATP-binding</keyword>
<keyword id="KW-0963">Cytoplasm</keyword>
<keyword id="KW-0229">DNA integration</keyword>
<keyword id="KW-0233">DNA recombination</keyword>
<keyword id="KW-0238">DNA-binding</keyword>
<keyword id="KW-0239">DNA-directed DNA polymerase</keyword>
<keyword id="KW-0255">Endonuclease</keyword>
<keyword id="KW-0378">Hydrolase</keyword>
<keyword id="KW-0460">Magnesium</keyword>
<keyword id="KW-0479">Metal-binding</keyword>
<keyword id="KW-0511">Multifunctional enzyme</keyword>
<keyword id="KW-0540">Nuclease</keyword>
<keyword id="KW-0547">Nucleotide-binding</keyword>
<keyword id="KW-0548">Nucleotidyltransferase</keyword>
<keyword id="KW-0539">Nucleus</keyword>
<keyword id="KW-0597">Phosphoprotein</keyword>
<keyword id="KW-0645">Protease</keyword>
<keyword id="KW-1185">Reference proteome</keyword>
<keyword id="KW-0688">Ribosomal frameshifting</keyword>
<keyword id="KW-0694">RNA-binding</keyword>
<keyword id="KW-0695">RNA-directed DNA polymerase</keyword>
<keyword id="KW-0808">Transferase</keyword>
<keyword id="KW-0814">Transposable element</keyword>
<keyword id="KW-0815">Transposition</keyword>
<keyword id="KW-1188">Viral release from host cell</keyword>
<keyword id="KW-0917">Virion maturation</keyword>
<keyword id="KW-0862">Zinc</keyword>
<keyword id="KW-0863">Zinc-finger</keyword>
<accession>Q03612</accession>
<accession>D3DM43</accession>
<gene>
    <name type="primary">TY1B-ER1</name>
    <name type="synonym">YERCTy1-1 POL</name>
    <name type="ordered locus">YER138C</name>
</gene>
<reference key="1">
    <citation type="journal article" date="1997" name="Nature">
        <title>The nucleotide sequence of Saccharomyces cerevisiae chromosome V.</title>
        <authorList>
            <person name="Dietrich F.S."/>
            <person name="Mulligan J.T."/>
            <person name="Hennessy K.M."/>
            <person name="Yelton M.A."/>
            <person name="Allen E."/>
            <person name="Araujo R."/>
            <person name="Aviles E."/>
            <person name="Berno A."/>
            <person name="Brennan T."/>
            <person name="Carpenter J."/>
            <person name="Chen E."/>
            <person name="Cherry J.M."/>
            <person name="Chung E."/>
            <person name="Duncan M."/>
            <person name="Guzman E."/>
            <person name="Hartzell G."/>
            <person name="Hunicke-Smith S."/>
            <person name="Hyman R.W."/>
            <person name="Kayser A."/>
            <person name="Komp C."/>
            <person name="Lashkari D."/>
            <person name="Lew H."/>
            <person name="Lin D."/>
            <person name="Mosedale D."/>
            <person name="Nakahara K."/>
            <person name="Namath A."/>
            <person name="Norgren R."/>
            <person name="Oefner P."/>
            <person name="Oh C."/>
            <person name="Petel F.X."/>
            <person name="Roberts D."/>
            <person name="Sehl P."/>
            <person name="Schramm S."/>
            <person name="Shogren T."/>
            <person name="Smith V."/>
            <person name="Taylor P."/>
            <person name="Wei Y."/>
            <person name="Botstein D."/>
            <person name="Davis R.W."/>
        </authorList>
    </citation>
    <scope>NUCLEOTIDE SEQUENCE [LARGE SCALE GENOMIC DNA]</scope>
    <source>
        <strain>ATCC 204508 / S288c</strain>
    </source>
</reference>
<reference key="2">
    <citation type="journal article" date="2014" name="G3 (Bethesda)">
        <title>The reference genome sequence of Saccharomyces cerevisiae: Then and now.</title>
        <authorList>
            <person name="Engel S.R."/>
            <person name="Dietrich F.S."/>
            <person name="Fisk D.G."/>
            <person name="Binkley G."/>
            <person name="Balakrishnan R."/>
            <person name="Costanzo M.C."/>
            <person name="Dwight S.S."/>
            <person name="Hitz B.C."/>
            <person name="Karra K."/>
            <person name="Nash R.S."/>
            <person name="Weng S."/>
            <person name="Wong E.D."/>
            <person name="Lloyd P."/>
            <person name="Skrzypek M.S."/>
            <person name="Miyasato S.R."/>
            <person name="Simison M."/>
            <person name="Cherry J.M."/>
        </authorList>
    </citation>
    <scope>GENOME REANNOTATION</scope>
    <source>
        <strain>ATCC 204508 / S288c</strain>
    </source>
</reference>
<reference key="3">
    <citation type="journal article" date="1998" name="Genome Res.">
        <title>Transposable elements and genome organization: a comprehensive survey of retrotransposons revealed by the complete Saccharomyces cerevisiae genome sequence.</title>
        <authorList>
            <person name="Kim J.M."/>
            <person name="Vanguri S."/>
            <person name="Boeke J.D."/>
            <person name="Gabriel A."/>
            <person name="Voytas D.F."/>
        </authorList>
    </citation>
    <scope>NOMENCLATURE</scope>
</reference>
<reference key="4">
    <citation type="journal article" date="2005" name="Cytogenet. Genome Res.">
        <title>Happy together: the life and times of Ty retrotransposons and their hosts.</title>
        <authorList>
            <person name="Lesage P."/>
            <person name="Todeschini A.L."/>
        </authorList>
    </citation>
    <scope>REVIEW</scope>
</reference>
<reference key="5">
    <citation type="journal article" date="2005" name="Cytogenet. Genome Res.">
        <title>Reverse transcriptase and integrase of the Saccharomyces cerevisiae Ty1 element.</title>
        <authorList>
            <person name="Wilhelm F.-X."/>
            <person name="Wilhelm M."/>
            <person name="Gabriel A."/>
        </authorList>
    </citation>
    <scope>REVIEW</scope>
    <scope>DOMAINS</scope>
</reference>
<protein>
    <recommendedName>
        <fullName>Transposon Ty1-ER1 Gag-Pol polyprotein</fullName>
    </recommendedName>
    <alternativeName>
        <fullName>Gag-Pol-p199</fullName>
    </alternativeName>
    <alternativeName>
        <fullName>TY1A-TY1B</fullName>
    </alternativeName>
    <alternativeName>
        <fullName>Transposon Ty1 TYA-TYB polyprotein</fullName>
    </alternativeName>
    <alternativeName>
        <fullName>p190</fullName>
    </alternativeName>
    <component>
        <recommendedName>
            <fullName>Capsid protein</fullName>
            <shortName>CA</shortName>
        </recommendedName>
        <alternativeName>
            <fullName>Gag-p45</fullName>
        </alternativeName>
        <alternativeName>
            <fullName>p54</fullName>
        </alternativeName>
    </component>
    <component>
        <recommendedName>
            <fullName>Ty1 protease</fullName>
            <shortName>PR</shortName>
            <ecNumber>3.4.23.-</ecNumber>
        </recommendedName>
        <alternativeName>
            <fullName>Pol-p20</fullName>
        </alternativeName>
        <alternativeName>
            <fullName>p23</fullName>
        </alternativeName>
    </component>
    <component>
        <recommendedName>
            <fullName>Integrase</fullName>
            <shortName>IN</shortName>
        </recommendedName>
        <alternativeName>
            <fullName>Pol-p71</fullName>
        </alternativeName>
        <alternativeName>
            <fullName>p84</fullName>
        </alternativeName>
        <alternativeName>
            <fullName>p90</fullName>
        </alternativeName>
    </component>
    <component>
        <recommendedName>
            <fullName>Reverse transcriptase/ribonuclease H</fullName>
            <shortName>RT</shortName>
            <ecNumber>2.7.7.49</ecNumber>
            <ecNumber>2.7.7.7</ecNumber>
            <ecNumber>3.1.26.4</ecNumber>
        </recommendedName>
        <alternativeName>
            <fullName>Pol-p63</fullName>
        </alternativeName>
        <alternativeName>
            <fullName>p60</fullName>
        </alternativeName>
    </component>
</protein>
<dbReference type="EC" id="3.4.23.-"/>
<dbReference type="EC" id="2.7.7.49"/>
<dbReference type="EC" id="2.7.7.7"/>
<dbReference type="EC" id="3.1.26.4"/>
<dbReference type="EMBL" id="U18917">
    <property type="protein sequence ID" value="AAB64665.1"/>
    <property type="molecule type" value="Genomic_DNA"/>
</dbReference>
<dbReference type="EMBL" id="BK006939">
    <property type="protein sequence ID" value="DAA07797.1"/>
    <property type="molecule type" value="Genomic_DNA"/>
</dbReference>
<dbReference type="PIR" id="S50641">
    <property type="entry name" value="S50641"/>
</dbReference>
<dbReference type="RefSeq" id="NP_011064.3">
    <molecule id="Q03612-1"/>
    <property type="nucleotide sequence ID" value="NM_001179028.4"/>
</dbReference>
<dbReference type="SMR" id="Q03612"/>
<dbReference type="BioGRID" id="36885">
    <property type="interactions" value="22"/>
</dbReference>
<dbReference type="DIP" id="DIP-8790N"/>
<dbReference type="FunCoup" id="Q03612">
    <property type="interactions" value="470"/>
</dbReference>
<dbReference type="IntAct" id="Q03612">
    <property type="interactions" value="10"/>
</dbReference>
<dbReference type="MINT" id="Q03612"/>
<dbReference type="GlyGen" id="Q03612">
    <property type="glycosylation" value="3 sites"/>
</dbReference>
<dbReference type="iPTMnet" id="Q03612"/>
<dbReference type="PaxDb" id="4932-YER138C"/>
<dbReference type="PeptideAtlas" id="Q03612"/>
<dbReference type="GeneID" id="856879"/>
<dbReference type="KEGG" id="sce:YER138C"/>
<dbReference type="AGR" id="SGD:S000000940"/>
<dbReference type="SGD" id="S000000940">
    <property type="gene designation" value="YER138C"/>
</dbReference>
<dbReference type="VEuPathDB" id="FungiDB:YER138C"/>
<dbReference type="eggNOG" id="KOG0017">
    <property type="taxonomic scope" value="Eukaryota"/>
</dbReference>
<dbReference type="HOGENOM" id="CLU_244151_0_0_1"/>
<dbReference type="InParanoid" id="Q03612"/>
<dbReference type="OrthoDB" id="5423336at2759"/>
<dbReference type="ChiTaRS" id="YER138C">
    <property type="organism name" value="yeast"/>
</dbReference>
<dbReference type="Proteomes" id="UP000002311">
    <property type="component" value="Chromosome V"/>
</dbReference>
<dbReference type="RNAct" id="Q03612">
    <property type="molecule type" value="protein"/>
</dbReference>
<dbReference type="GO" id="GO:0005737">
    <property type="term" value="C:cytoplasm"/>
    <property type="evidence" value="ECO:0007669"/>
    <property type="project" value="UniProtKB-SubCell"/>
</dbReference>
<dbReference type="GO" id="GO:0005634">
    <property type="term" value="C:nucleus"/>
    <property type="evidence" value="ECO:0000314"/>
    <property type="project" value="SGD"/>
</dbReference>
<dbReference type="GO" id="GO:0004190">
    <property type="term" value="F:aspartic-type endopeptidase activity"/>
    <property type="evidence" value="ECO:0007669"/>
    <property type="project" value="UniProtKB-KW"/>
</dbReference>
<dbReference type="GO" id="GO:0005524">
    <property type="term" value="F:ATP binding"/>
    <property type="evidence" value="ECO:0007669"/>
    <property type="project" value="UniProtKB-KW"/>
</dbReference>
<dbReference type="GO" id="GO:0003677">
    <property type="term" value="F:DNA binding"/>
    <property type="evidence" value="ECO:0007669"/>
    <property type="project" value="UniProtKB-KW"/>
</dbReference>
<dbReference type="GO" id="GO:0003887">
    <property type="term" value="F:DNA-directed DNA polymerase activity"/>
    <property type="evidence" value="ECO:0007669"/>
    <property type="project" value="UniProtKB-KW"/>
</dbReference>
<dbReference type="GO" id="GO:0003723">
    <property type="term" value="F:RNA binding"/>
    <property type="evidence" value="ECO:0007669"/>
    <property type="project" value="UniProtKB-KW"/>
</dbReference>
<dbReference type="GO" id="GO:0003964">
    <property type="term" value="F:RNA-directed DNA polymerase activity"/>
    <property type="evidence" value="ECO:0007669"/>
    <property type="project" value="UniProtKB-KW"/>
</dbReference>
<dbReference type="GO" id="GO:0004523">
    <property type="term" value="F:RNA-DNA hybrid ribonuclease activity"/>
    <property type="evidence" value="ECO:0007669"/>
    <property type="project" value="UniProtKB-EC"/>
</dbReference>
<dbReference type="GO" id="GO:0008270">
    <property type="term" value="F:zinc ion binding"/>
    <property type="evidence" value="ECO:0007669"/>
    <property type="project" value="UniProtKB-KW"/>
</dbReference>
<dbReference type="GO" id="GO:0015074">
    <property type="term" value="P:DNA integration"/>
    <property type="evidence" value="ECO:0007669"/>
    <property type="project" value="UniProtKB-KW"/>
</dbReference>
<dbReference type="GO" id="GO:0006310">
    <property type="term" value="P:DNA recombination"/>
    <property type="evidence" value="ECO:0007669"/>
    <property type="project" value="UniProtKB-KW"/>
</dbReference>
<dbReference type="GO" id="GO:0006508">
    <property type="term" value="P:proteolysis"/>
    <property type="evidence" value="ECO:0007669"/>
    <property type="project" value="UniProtKB-KW"/>
</dbReference>
<dbReference type="GO" id="GO:0032196">
    <property type="term" value="P:transposition"/>
    <property type="evidence" value="ECO:0007669"/>
    <property type="project" value="UniProtKB-KW"/>
</dbReference>
<dbReference type="GO" id="GO:0075523">
    <property type="term" value="P:viral translational frameshifting"/>
    <property type="evidence" value="ECO:0007669"/>
    <property type="project" value="UniProtKB-KW"/>
</dbReference>
<dbReference type="CDD" id="cd09272">
    <property type="entry name" value="RNase_HI_RT_Ty1"/>
    <property type="match status" value="1"/>
</dbReference>
<dbReference type="FunFam" id="3.30.420.10:FF:000050">
    <property type="entry name" value="Transposon Ty2-DR3 Gag-Pol polyprotein"/>
    <property type="match status" value="1"/>
</dbReference>
<dbReference type="Gene3D" id="3.30.420.10">
    <property type="entry name" value="Ribonuclease H-like superfamily/Ribonuclease H"/>
    <property type="match status" value="1"/>
</dbReference>
<dbReference type="InterPro" id="IPR001969">
    <property type="entry name" value="Aspartic_peptidase_AS"/>
</dbReference>
<dbReference type="InterPro" id="IPR043502">
    <property type="entry name" value="DNA/RNA_pol_sf"/>
</dbReference>
<dbReference type="InterPro" id="IPR001584">
    <property type="entry name" value="Integrase_cat-core"/>
</dbReference>
<dbReference type="InterPro" id="IPR039537">
    <property type="entry name" value="Retrotran_Ty1/copia-like"/>
</dbReference>
<dbReference type="InterPro" id="IPR012337">
    <property type="entry name" value="RNaseH-like_sf"/>
</dbReference>
<dbReference type="InterPro" id="IPR036397">
    <property type="entry name" value="RNaseH_sf"/>
</dbReference>
<dbReference type="InterPro" id="IPR013103">
    <property type="entry name" value="RVT_2"/>
</dbReference>
<dbReference type="InterPro" id="IPR015820">
    <property type="entry name" value="TYA"/>
</dbReference>
<dbReference type="PANTHER" id="PTHR42648">
    <property type="entry name" value="TRANSPOSASE, PUTATIVE-RELATED"/>
    <property type="match status" value="1"/>
</dbReference>
<dbReference type="PANTHER" id="PTHR42648:SF11">
    <property type="entry name" value="TRANSPOSON TY4-P GAG-POL POLYPROTEIN"/>
    <property type="match status" value="1"/>
</dbReference>
<dbReference type="Pfam" id="PF00665">
    <property type="entry name" value="rve"/>
    <property type="match status" value="1"/>
</dbReference>
<dbReference type="Pfam" id="PF07727">
    <property type="entry name" value="RVT_2"/>
    <property type="match status" value="1"/>
</dbReference>
<dbReference type="Pfam" id="PF01021">
    <property type="entry name" value="TYA"/>
    <property type="match status" value="1"/>
</dbReference>
<dbReference type="SUPFAM" id="SSF56672">
    <property type="entry name" value="DNA/RNA polymerases"/>
    <property type="match status" value="1"/>
</dbReference>
<dbReference type="SUPFAM" id="SSF53098">
    <property type="entry name" value="Ribonuclease H-like"/>
    <property type="match status" value="1"/>
</dbReference>
<dbReference type="PROSITE" id="PS00141">
    <property type="entry name" value="ASP_PROTEASE"/>
    <property type="match status" value="1"/>
</dbReference>
<dbReference type="PROSITE" id="PS50994">
    <property type="entry name" value="INTEGRASE"/>
    <property type="match status" value="1"/>
</dbReference>